<gene>
    <name evidence="3" type="primary">Nubp1</name>
    <name evidence="3" type="ORF">CG17904</name>
</gene>
<keyword id="KW-0004">4Fe-4S</keyword>
<keyword id="KW-0067">ATP-binding</keyword>
<keyword id="KW-0963">Cytoplasm</keyword>
<keyword id="KW-0408">Iron</keyword>
<keyword id="KW-0411">Iron-sulfur</keyword>
<keyword id="KW-0479">Metal-binding</keyword>
<keyword id="KW-0547">Nucleotide-binding</keyword>
<keyword id="KW-1185">Reference proteome</keyword>
<proteinExistence type="evidence at protein level"/>
<comment type="function">
    <text evidence="1">Component of the cytosolic iron-sulfur (Fe/S) protein assembly (CIA) machinery. Required for maturation of extramitochondrial Fe-S proteins. The Nubp1-Nubp2 heterotetramer forms a Fe-S scaffold complex, mediating the de novo assembly of an Fe-S cluster and its transfer to target apoproteins.</text>
</comment>
<comment type="cofactor">
    <cofactor evidence="1">
        <name>[4Fe-4S] cluster</name>
        <dbReference type="ChEBI" id="CHEBI:49883"/>
    </cofactor>
    <text evidence="1">Binds 4 [4Fe-4S] clusters per heterotetramer. Contains two stable clusters in the N-termini of Nubp1 and two labile, bridging clusters between subunits of the Nubp1-Nubp2 heterotetramer.</text>
</comment>
<comment type="subunit">
    <text evidence="1">Heterotetramer of 2 Nubp1 and 2 Nubp2 chains.</text>
</comment>
<comment type="interaction">
    <interactant intactId="EBI-115857">
        <id>Q9VJI9</id>
    </interactant>
    <interactant intactId="EBI-168094">
        <id>Q9VPD2</id>
        <label>Nubp2</label>
    </interactant>
    <organismsDiffer>false</organismsDiffer>
    <experiments>5</experiments>
</comment>
<comment type="subcellular location">
    <subcellularLocation>
        <location evidence="1">Cytoplasm</location>
    </subcellularLocation>
</comment>
<comment type="similarity">
    <text evidence="1">Belongs to the Mrp/NBP35 ATP-binding proteins family. NUBP1/NBP35 subfamily.</text>
</comment>
<evidence type="ECO:0000255" key="1">
    <source>
        <dbReference type="HAMAP-Rule" id="MF_03038"/>
    </source>
</evidence>
<evidence type="ECO:0000256" key="2">
    <source>
        <dbReference type="SAM" id="MobiDB-lite"/>
    </source>
</evidence>
<evidence type="ECO:0000312" key="3">
    <source>
        <dbReference type="FlyBase" id="FBgn0032597"/>
    </source>
</evidence>
<dbReference type="EMBL" id="AE014134">
    <property type="protein sequence ID" value="AAF53559.1"/>
    <property type="molecule type" value="Genomic_DNA"/>
</dbReference>
<dbReference type="EMBL" id="AY069623">
    <property type="protein sequence ID" value="AAL39768.1"/>
    <property type="molecule type" value="mRNA"/>
</dbReference>
<dbReference type="RefSeq" id="NP_609805.1">
    <property type="nucleotide sequence ID" value="NM_135961.4"/>
</dbReference>
<dbReference type="SMR" id="Q9VJI9"/>
<dbReference type="BioGRID" id="61007">
    <property type="interactions" value="1"/>
</dbReference>
<dbReference type="FunCoup" id="Q9VJI9">
    <property type="interactions" value="820"/>
</dbReference>
<dbReference type="IntAct" id="Q9VJI9">
    <property type="interactions" value="2"/>
</dbReference>
<dbReference type="STRING" id="7227.FBpp0080448"/>
<dbReference type="PaxDb" id="7227-FBpp0080448"/>
<dbReference type="DNASU" id="35000"/>
<dbReference type="EnsemblMetazoa" id="FBtr0080891">
    <property type="protein sequence ID" value="FBpp0080448"/>
    <property type="gene ID" value="FBgn0032597"/>
</dbReference>
<dbReference type="GeneID" id="35000"/>
<dbReference type="KEGG" id="dme:Dmel_CG17904"/>
<dbReference type="UCSC" id="CG17904-RA">
    <property type="organism name" value="d. melanogaster"/>
</dbReference>
<dbReference type="AGR" id="FB:FBgn0032597"/>
<dbReference type="CTD" id="4682"/>
<dbReference type="FlyBase" id="FBgn0032597">
    <property type="gene designation" value="Nubp1"/>
</dbReference>
<dbReference type="VEuPathDB" id="VectorBase:FBgn0032597"/>
<dbReference type="eggNOG" id="KOG3022">
    <property type="taxonomic scope" value="Eukaryota"/>
</dbReference>
<dbReference type="GeneTree" id="ENSGT00950000183193"/>
<dbReference type="HOGENOM" id="CLU_024839_0_1_1"/>
<dbReference type="InParanoid" id="Q9VJI9"/>
<dbReference type="OMA" id="VSGCPMR"/>
<dbReference type="OrthoDB" id="1741334at2759"/>
<dbReference type="PhylomeDB" id="Q9VJI9"/>
<dbReference type="BioGRID-ORCS" id="35000">
    <property type="hits" value="1 hit in 1 CRISPR screen"/>
</dbReference>
<dbReference type="GenomeRNAi" id="35000"/>
<dbReference type="PRO" id="PR:Q9VJI9"/>
<dbReference type="Proteomes" id="UP000000803">
    <property type="component" value="Chromosome 2L"/>
</dbReference>
<dbReference type="Bgee" id="FBgn0032597">
    <property type="expression patterns" value="Expressed in adult anterior midgut class II enteroendocrine cell in adult midgut (Drosophila) and 119 other cell types or tissues"/>
</dbReference>
<dbReference type="GO" id="GO:0005829">
    <property type="term" value="C:cytosol"/>
    <property type="evidence" value="ECO:0000250"/>
    <property type="project" value="UniProtKB"/>
</dbReference>
<dbReference type="GO" id="GO:1904564">
    <property type="term" value="C:cytosolic [4Fe-4S] assembly scaffold complex"/>
    <property type="evidence" value="ECO:0000250"/>
    <property type="project" value="FlyBase"/>
</dbReference>
<dbReference type="GO" id="GO:0051539">
    <property type="term" value="F:4 iron, 4 sulfur cluster binding"/>
    <property type="evidence" value="ECO:0007669"/>
    <property type="project" value="UniProtKB-UniRule"/>
</dbReference>
<dbReference type="GO" id="GO:0005524">
    <property type="term" value="F:ATP binding"/>
    <property type="evidence" value="ECO:0007669"/>
    <property type="project" value="UniProtKB-KW"/>
</dbReference>
<dbReference type="GO" id="GO:0016887">
    <property type="term" value="F:ATP hydrolysis activity"/>
    <property type="evidence" value="ECO:0000250"/>
    <property type="project" value="FlyBase"/>
</dbReference>
<dbReference type="GO" id="GO:0140663">
    <property type="term" value="F:ATP-dependent FeS chaperone activity"/>
    <property type="evidence" value="ECO:0007669"/>
    <property type="project" value="InterPro"/>
</dbReference>
<dbReference type="GO" id="GO:0051536">
    <property type="term" value="F:iron-sulfur cluster binding"/>
    <property type="evidence" value="ECO:0000250"/>
    <property type="project" value="UniProtKB"/>
</dbReference>
<dbReference type="GO" id="GO:0046872">
    <property type="term" value="F:metal ion binding"/>
    <property type="evidence" value="ECO:0007669"/>
    <property type="project" value="UniProtKB-KW"/>
</dbReference>
<dbReference type="GO" id="GO:0016226">
    <property type="term" value="P:iron-sulfur cluster assembly"/>
    <property type="evidence" value="ECO:0000250"/>
    <property type="project" value="UniProtKB"/>
</dbReference>
<dbReference type="CDD" id="cd02037">
    <property type="entry name" value="Mrp_NBP35"/>
    <property type="match status" value="1"/>
</dbReference>
<dbReference type="FunFam" id="3.40.50.300:FF:001759">
    <property type="entry name" value="Cytosolic Fe-S cluster assembly factor NUBP1 homolog"/>
    <property type="match status" value="1"/>
</dbReference>
<dbReference type="Gene3D" id="3.40.50.300">
    <property type="entry name" value="P-loop containing nucleotide triphosphate hydrolases"/>
    <property type="match status" value="1"/>
</dbReference>
<dbReference type="HAMAP" id="MF_02040">
    <property type="entry name" value="Mrp_NBP35"/>
    <property type="match status" value="1"/>
</dbReference>
<dbReference type="HAMAP" id="MF_03038">
    <property type="entry name" value="NUBP1"/>
    <property type="match status" value="1"/>
</dbReference>
<dbReference type="InterPro" id="IPR019591">
    <property type="entry name" value="Mrp/NBP35_ATP-bd"/>
</dbReference>
<dbReference type="InterPro" id="IPR028601">
    <property type="entry name" value="NUBP1/Nbp35"/>
</dbReference>
<dbReference type="InterPro" id="IPR027417">
    <property type="entry name" value="P-loop_NTPase"/>
</dbReference>
<dbReference type="InterPro" id="IPR033756">
    <property type="entry name" value="YlxH/NBP35"/>
</dbReference>
<dbReference type="PANTHER" id="PTHR23264:SF35">
    <property type="entry name" value="CYTOSOLIC FE-S CLUSTER ASSEMBLY FACTOR NUBP1"/>
    <property type="match status" value="1"/>
</dbReference>
<dbReference type="PANTHER" id="PTHR23264">
    <property type="entry name" value="NUCLEOTIDE-BINDING PROTEIN NBP35 YEAST -RELATED"/>
    <property type="match status" value="1"/>
</dbReference>
<dbReference type="Pfam" id="PF10609">
    <property type="entry name" value="ParA"/>
    <property type="match status" value="1"/>
</dbReference>
<dbReference type="SUPFAM" id="SSF52540">
    <property type="entry name" value="P-loop containing nucleoside triphosphate hydrolases"/>
    <property type="match status" value="1"/>
</dbReference>
<accession>Q9VJI9</accession>
<reference key="1">
    <citation type="journal article" date="2000" name="Science">
        <title>The genome sequence of Drosophila melanogaster.</title>
        <authorList>
            <person name="Adams M.D."/>
            <person name="Celniker S.E."/>
            <person name="Holt R.A."/>
            <person name="Evans C.A."/>
            <person name="Gocayne J.D."/>
            <person name="Amanatides P.G."/>
            <person name="Scherer S.E."/>
            <person name="Li P.W."/>
            <person name="Hoskins R.A."/>
            <person name="Galle R.F."/>
            <person name="George R.A."/>
            <person name="Lewis S.E."/>
            <person name="Richards S."/>
            <person name="Ashburner M."/>
            <person name="Henderson S.N."/>
            <person name="Sutton G.G."/>
            <person name="Wortman J.R."/>
            <person name="Yandell M.D."/>
            <person name="Zhang Q."/>
            <person name="Chen L.X."/>
            <person name="Brandon R.C."/>
            <person name="Rogers Y.-H.C."/>
            <person name="Blazej R.G."/>
            <person name="Champe M."/>
            <person name="Pfeiffer B.D."/>
            <person name="Wan K.H."/>
            <person name="Doyle C."/>
            <person name="Baxter E.G."/>
            <person name="Helt G."/>
            <person name="Nelson C.R."/>
            <person name="Miklos G.L.G."/>
            <person name="Abril J.F."/>
            <person name="Agbayani A."/>
            <person name="An H.-J."/>
            <person name="Andrews-Pfannkoch C."/>
            <person name="Baldwin D."/>
            <person name="Ballew R.M."/>
            <person name="Basu A."/>
            <person name="Baxendale J."/>
            <person name="Bayraktaroglu L."/>
            <person name="Beasley E.M."/>
            <person name="Beeson K.Y."/>
            <person name="Benos P.V."/>
            <person name="Berman B.P."/>
            <person name="Bhandari D."/>
            <person name="Bolshakov S."/>
            <person name="Borkova D."/>
            <person name="Botchan M.R."/>
            <person name="Bouck J."/>
            <person name="Brokstein P."/>
            <person name="Brottier P."/>
            <person name="Burtis K.C."/>
            <person name="Busam D.A."/>
            <person name="Butler H."/>
            <person name="Cadieu E."/>
            <person name="Center A."/>
            <person name="Chandra I."/>
            <person name="Cherry J.M."/>
            <person name="Cawley S."/>
            <person name="Dahlke C."/>
            <person name="Davenport L.B."/>
            <person name="Davies P."/>
            <person name="de Pablos B."/>
            <person name="Delcher A."/>
            <person name="Deng Z."/>
            <person name="Mays A.D."/>
            <person name="Dew I."/>
            <person name="Dietz S.M."/>
            <person name="Dodson K."/>
            <person name="Doup L.E."/>
            <person name="Downes M."/>
            <person name="Dugan-Rocha S."/>
            <person name="Dunkov B.C."/>
            <person name="Dunn P."/>
            <person name="Durbin K.J."/>
            <person name="Evangelista C.C."/>
            <person name="Ferraz C."/>
            <person name="Ferriera S."/>
            <person name="Fleischmann W."/>
            <person name="Fosler C."/>
            <person name="Gabrielian A.E."/>
            <person name="Garg N.S."/>
            <person name="Gelbart W.M."/>
            <person name="Glasser K."/>
            <person name="Glodek A."/>
            <person name="Gong F."/>
            <person name="Gorrell J.H."/>
            <person name="Gu Z."/>
            <person name="Guan P."/>
            <person name="Harris M."/>
            <person name="Harris N.L."/>
            <person name="Harvey D.A."/>
            <person name="Heiman T.J."/>
            <person name="Hernandez J.R."/>
            <person name="Houck J."/>
            <person name="Hostin D."/>
            <person name="Houston K.A."/>
            <person name="Howland T.J."/>
            <person name="Wei M.-H."/>
            <person name="Ibegwam C."/>
            <person name="Jalali M."/>
            <person name="Kalush F."/>
            <person name="Karpen G.H."/>
            <person name="Ke Z."/>
            <person name="Kennison J.A."/>
            <person name="Ketchum K.A."/>
            <person name="Kimmel B.E."/>
            <person name="Kodira C.D."/>
            <person name="Kraft C.L."/>
            <person name="Kravitz S."/>
            <person name="Kulp D."/>
            <person name="Lai Z."/>
            <person name="Lasko P."/>
            <person name="Lei Y."/>
            <person name="Levitsky A.A."/>
            <person name="Li J.H."/>
            <person name="Li Z."/>
            <person name="Liang Y."/>
            <person name="Lin X."/>
            <person name="Liu X."/>
            <person name="Mattei B."/>
            <person name="McIntosh T.C."/>
            <person name="McLeod M.P."/>
            <person name="McPherson D."/>
            <person name="Merkulov G."/>
            <person name="Milshina N.V."/>
            <person name="Mobarry C."/>
            <person name="Morris J."/>
            <person name="Moshrefi A."/>
            <person name="Mount S.M."/>
            <person name="Moy M."/>
            <person name="Murphy B."/>
            <person name="Murphy L."/>
            <person name="Muzny D.M."/>
            <person name="Nelson D.L."/>
            <person name="Nelson D.R."/>
            <person name="Nelson K.A."/>
            <person name="Nixon K."/>
            <person name="Nusskern D.R."/>
            <person name="Pacleb J.M."/>
            <person name="Palazzolo M."/>
            <person name="Pittman G.S."/>
            <person name="Pan S."/>
            <person name="Pollard J."/>
            <person name="Puri V."/>
            <person name="Reese M.G."/>
            <person name="Reinert K."/>
            <person name="Remington K."/>
            <person name="Saunders R.D.C."/>
            <person name="Scheeler F."/>
            <person name="Shen H."/>
            <person name="Shue B.C."/>
            <person name="Siden-Kiamos I."/>
            <person name="Simpson M."/>
            <person name="Skupski M.P."/>
            <person name="Smith T.J."/>
            <person name="Spier E."/>
            <person name="Spradling A.C."/>
            <person name="Stapleton M."/>
            <person name="Strong R."/>
            <person name="Sun E."/>
            <person name="Svirskas R."/>
            <person name="Tector C."/>
            <person name="Turner R."/>
            <person name="Venter E."/>
            <person name="Wang A.H."/>
            <person name="Wang X."/>
            <person name="Wang Z.-Y."/>
            <person name="Wassarman D.A."/>
            <person name="Weinstock G.M."/>
            <person name="Weissenbach J."/>
            <person name="Williams S.M."/>
            <person name="Woodage T."/>
            <person name="Worley K.C."/>
            <person name="Wu D."/>
            <person name="Yang S."/>
            <person name="Yao Q.A."/>
            <person name="Ye J."/>
            <person name="Yeh R.-F."/>
            <person name="Zaveri J.S."/>
            <person name="Zhan M."/>
            <person name="Zhang G."/>
            <person name="Zhao Q."/>
            <person name="Zheng L."/>
            <person name="Zheng X.H."/>
            <person name="Zhong F.N."/>
            <person name="Zhong W."/>
            <person name="Zhou X."/>
            <person name="Zhu S.C."/>
            <person name="Zhu X."/>
            <person name="Smith H.O."/>
            <person name="Gibbs R.A."/>
            <person name="Myers E.W."/>
            <person name="Rubin G.M."/>
            <person name="Venter J.C."/>
        </authorList>
    </citation>
    <scope>NUCLEOTIDE SEQUENCE [LARGE SCALE GENOMIC DNA]</scope>
    <source>
        <strain>Berkeley</strain>
    </source>
</reference>
<reference key="2">
    <citation type="journal article" date="2002" name="Genome Biol.">
        <title>Annotation of the Drosophila melanogaster euchromatic genome: a systematic review.</title>
        <authorList>
            <person name="Misra S."/>
            <person name="Crosby M.A."/>
            <person name="Mungall C.J."/>
            <person name="Matthews B.B."/>
            <person name="Campbell K.S."/>
            <person name="Hradecky P."/>
            <person name="Huang Y."/>
            <person name="Kaminker J.S."/>
            <person name="Millburn G.H."/>
            <person name="Prochnik S.E."/>
            <person name="Smith C.D."/>
            <person name="Tupy J.L."/>
            <person name="Whitfield E.J."/>
            <person name="Bayraktaroglu L."/>
            <person name="Berman B.P."/>
            <person name="Bettencourt B.R."/>
            <person name="Celniker S.E."/>
            <person name="de Grey A.D.N.J."/>
            <person name="Drysdale R.A."/>
            <person name="Harris N.L."/>
            <person name="Richter J."/>
            <person name="Russo S."/>
            <person name="Schroeder A.J."/>
            <person name="Shu S.Q."/>
            <person name="Stapleton M."/>
            <person name="Yamada C."/>
            <person name="Ashburner M."/>
            <person name="Gelbart W.M."/>
            <person name="Rubin G.M."/>
            <person name="Lewis S.E."/>
        </authorList>
    </citation>
    <scope>GENOME REANNOTATION</scope>
    <source>
        <strain>Berkeley</strain>
    </source>
</reference>
<reference key="3">
    <citation type="submission" date="2003-02" db="EMBL/GenBank/DDBJ databases">
        <authorList>
            <person name="Stapleton M."/>
            <person name="Brokstein P."/>
            <person name="Hong L."/>
            <person name="Agbayani A."/>
            <person name="Carlson J.W."/>
            <person name="Champe M."/>
            <person name="Chavez C."/>
            <person name="Dorsett V."/>
            <person name="Dresnek D."/>
            <person name="Farfan D."/>
            <person name="Frise E."/>
            <person name="George R.A."/>
            <person name="Gonzalez M."/>
            <person name="Guarin H."/>
            <person name="Kronmiller B."/>
            <person name="Li P.W."/>
            <person name="Liao G."/>
            <person name="Miranda A."/>
            <person name="Mungall C.J."/>
            <person name="Nunoo J."/>
            <person name="Pacleb J.M."/>
            <person name="Paragas V."/>
            <person name="Park S."/>
            <person name="Patel S."/>
            <person name="Phouanenavong S."/>
            <person name="Wan K.H."/>
            <person name="Yu C."/>
            <person name="Lewis S.E."/>
            <person name="Rubin G.M."/>
            <person name="Celniker S.E."/>
        </authorList>
    </citation>
    <scope>NUCLEOTIDE SEQUENCE [LARGE SCALE MRNA]</scope>
    <source>
        <strain>Berkeley</strain>
        <tissue>Embryo</tissue>
    </source>
</reference>
<organism>
    <name type="scientific">Drosophila melanogaster</name>
    <name type="common">Fruit fly</name>
    <dbReference type="NCBI Taxonomy" id="7227"/>
    <lineage>
        <taxon>Eukaryota</taxon>
        <taxon>Metazoa</taxon>
        <taxon>Ecdysozoa</taxon>
        <taxon>Arthropoda</taxon>
        <taxon>Hexapoda</taxon>
        <taxon>Insecta</taxon>
        <taxon>Pterygota</taxon>
        <taxon>Neoptera</taxon>
        <taxon>Endopterygota</taxon>
        <taxon>Diptera</taxon>
        <taxon>Brachycera</taxon>
        <taxon>Muscomorpha</taxon>
        <taxon>Ephydroidea</taxon>
        <taxon>Drosophilidae</taxon>
        <taxon>Drosophila</taxon>
        <taxon>Sophophora</taxon>
    </lineage>
</organism>
<protein>
    <recommendedName>
        <fullName evidence="1">Cytosolic Fe-S cluster assembly factor Nubp1 homolog</fullName>
    </recommendedName>
</protein>
<feature type="chain" id="PRO_0000382604" description="Cytosolic Fe-S cluster assembly factor Nubp1 homolog">
    <location>
        <begin position="1"/>
        <end position="311"/>
    </location>
</feature>
<feature type="region of interest" description="Disordered" evidence="2">
    <location>
        <begin position="1"/>
        <end position="21"/>
    </location>
</feature>
<feature type="binding site" evidence="1">
    <location>
        <position position="9"/>
    </location>
    <ligand>
        <name>[4Fe-4S] cluster</name>
        <dbReference type="ChEBI" id="CHEBI:49883"/>
        <label>1</label>
    </ligand>
</feature>
<feature type="binding site" evidence="1">
    <location>
        <position position="23"/>
    </location>
    <ligand>
        <name>[4Fe-4S] cluster</name>
        <dbReference type="ChEBI" id="CHEBI:49883"/>
        <label>1</label>
    </ligand>
</feature>
<feature type="binding site" evidence="1">
    <location>
        <position position="26"/>
    </location>
    <ligand>
        <name>[4Fe-4S] cluster</name>
        <dbReference type="ChEBI" id="CHEBI:49883"/>
        <label>1</label>
    </ligand>
</feature>
<feature type="binding site" evidence="1">
    <location>
        <position position="32"/>
    </location>
    <ligand>
        <name>[4Fe-4S] cluster</name>
        <dbReference type="ChEBI" id="CHEBI:49883"/>
        <label>1</label>
    </ligand>
</feature>
<feature type="binding site" evidence="1">
    <location>
        <begin position="63"/>
        <end position="70"/>
    </location>
    <ligand>
        <name>ATP</name>
        <dbReference type="ChEBI" id="CHEBI:30616"/>
    </ligand>
</feature>
<feature type="binding site" evidence="1">
    <location>
        <position position="240"/>
    </location>
    <ligand>
        <name>[4Fe-4S] cluster</name>
        <dbReference type="ChEBI" id="CHEBI:49883"/>
        <label>2</label>
        <note>ligand shared with heterodimeric partner</note>
    </ligand>
</feature>
<feature type="binding site" evidence="1">
    <location>
        <position position="243"/>
    </location>
    <ligand>
        <name>[4Fe-4S] cluster</name>
        <dbReference type="ChEBI" id="CHEBI:49883"/>
        <label>2</label>
        <note>ligand shared with heterodimeric partner</note>
    </ligand>
</feature>
<sequence length="311" mass="33071">MQAPPPEHCPGVESEEAGKGSACSGCPNQGLCSDPNKKLEDPGKALVVESMKDVKHKLLILSGKGGVGKSTVTSLLTRYLARSNPDSNFGVLDIDICGPSQPRLMGALGESVHQSGYGWSPVGIEDNVCLMSIGFLLGSVDDAIIWRGPKKNGMIRQFLSEVDWGNLDLLLLDTPPGTSDEHLSVVSYLKDDANPESLRAVMVTTPQEVSLLDVRKEINFCKKQNIPIVGVIENMSSFRCGHCGNSSEIFPAKTGGAAAMCAEMGIPLLGSLPLDQQISKACDSGEDLTEFKNVTTEALEGICSKIMASFS</sequence>
<name>NUBP1_DROME</name>